<gene>
    <name evidence="2 9" type="primary">Coq7</name>
</gene>
<sequence>MSAAGAIAAASVGRLRTGVRRPFSEYGRGLIIRCHSSGMTLDNINRAAVDRIIRVDHAGEYGANRIYAGQMAVLGRTSVGPVIQKMWDQEKNHLKKFNELMIAFRVRPTVLMPLWNVAGFALGAGTALLGKEGAMACTVAVEESIANHYNNQIRMLMEEDPEKYEELLQVIKQFRDEELEHHDTGLDHDAELAPAYALLKRIIQAGCSAAIYLSERF</sequence>
<protein>
    <recommendedName>
        <fullName evidence="8">NADPH-dependent 3-demethoxyubiquinone 3-hydroxylase, mitochondrial</fullName>
        <ecNumber evidence="6">1.14.13.253</ecNumber>
    </recommendedName>
    <alternativeName>
        <fullName evidence="8">3-demethoxyubiquinone 3-hydroxylase (NADH)</fullName>
    </alternativeName>
    <alternativeName>
        <fullName evidence="2">Timing protein clk-1 homolog</fullName>
    </alternativeName>
    <alternativeName>
        <fullName evidence="2">Ubiquinone biosynthesis monooxygenase COQ7</fullName>
    </alternativeName>
</protein>
<feature type="transit peptide" description="Mitochondrion" evidence="2">
    <location>
        <begin position="1"/>
        <end position="23"/>
    </location>
</feature>
<feature type="chain" id="PRO_0000079252" description="NADPH-dependent 3-demethoxyubiquinone 3-hydroxylase, mitochondrial">
    <location>
        <begin position="24"/>
        <end position="217"/>
    </location>
</feature>
<feature type="repeat" description="1">
    <location>
        <begin position="48"/>
        <end position="129"/>
    </location>
</feature>
<feature type="repeat" description="2">
    <location>
        <begin position="130"/>
        <end position="217"/>
    </location>
</feature>
<feature type="region of interest" description="2 X approximate tandem repeats">
    <location>
        <begin position="48"/>
        <end position="217"/>
    </location>
</feature>
<feature type="binding site" evidence="1">
    <location>
        <position position="51"/>
    </location>
    <ligand>
        <name>NADH</name>
        <dbReference type="ChEBI" id="CHEBI:57945"/>
    </ligand>
</feature>
<feature type="binding site" evidence="2">
    <location>
        <position position="60"/>
    </location>
    <ligand>
        <name>Fe cation</name>
        <dbReference type="ChEBI" id="CHEBI:24875"/>
        <label>1</label>
    </ligand>
</feature>
<feature type="binding site" evidence="2">
    <location>
        <position position="90"/>
    </location>
    <ligand>
        <name>Fe cation</name>
        <dbReference type="ChEBI" id="CHEBI:24875"/>
        <label>1</label>
    </ligand>
</feature>
<feature type="binding site" evidence="2">
    <location>
        <position position="90"/>
    </location>
    <ligand>
        <name>Fe cation</name>
        <dbReference type="ChEBI" id="CHEBI:24875"/>
        <label>2</label>
    </ligand>
</feature>
<feature type="binding site" evidence="2">
    <location>
        <position position="93"/>
    </location>
    <ligand>
        <name>Fe cation</name>
        <dbReference type="ChEBI" id="CHEBI:24875"/>
        <label>1</label>
    </ligand>
</feature>
<feature type="binding site" evidence="2">
    <location>
        <position position="142"/>
    </location>
    <ligand>
        <name>Fe cation</name>
        <dbReference type="ChEBI" id="CHEBI:24875"/>
        <label>2</label>
    </ligand>
</feature>
<feature type="binding site" evidence="2">
    <location>
        <position position="178"/>
    </location>
    <ligand>
        <name>Fe cation</name>
        <dbReference type="ChEBI" id="CHEBI:24875"/>
        <label>1</label>
    </ligand>
</feature>
<feature type="binding site" evidence="2">
    <location>
        <position position="178"/>
    </location>
    <ligand>
        <name>Fe cation</name>
        <dbReference type="ChEBI" id="CHEBI:24875"/>
        <label>2</label>
    </ligand>
</feature>
<feature type="binding site" evidence="2">
    <location>
        <position position="181"/>
    </location>
    <ligand>
        <name>Fe cation</name>
        <dbReference type="ChEBI" id="CHEBI:24875"/>
        <label>2</label>
    </ligand>
</feature>
<feature type="binding site" evidence="1">
    <location>
        <position position="212"/>
    </location>
    <ligand>
        <name>NADH</name>
        <dbReference type="ChEBI" id="CHEBI:57945"/>
    </ligand>
</feature>
<feature type="binding site" evidence="1">
    <location>
        <position position="216"/>
    </location>
    <ligand>
        <name>NADH</name>
        <dbReference type="ChEBI" id="CHEBI:57945"/>
    </ligand>
</feature>
<feature type="mutagenesis site" description="No detectable ubiquinone is produced." evidence="7">
    <original>E</original>
    <variation>K</variation>
    <location>
        <position position="178"/>
    </location>
</feature>
<keyword id="KW-0408">Iron</keyword>
<keyword id="KW-0472">Membrane</keyword>
<keyword id="KW-0479">Metal-binding</keyword>
<keyword id="KW-0496">Mitochondrion</keyword>
<keyword id="KW-0999">Mitochondrion inner membrane</keyword>
<keyword id="KW-0503">Monooxygenase</keyword>
<keyword id="KW-0520">NAD</keyword>
<keyword id="KW-0560">Oxidoreductase</keyword>
<keyword id="KW-1185">Reference proteome</keyword>
<keyword id="KW-0677">Repeat</keyword>
<keyword id="KW-0809">Transit peptide</keyword>
<keyword id="KW-0831">Ubiquinone biosynthesis</keyword>
<comment type="function">
    <text evidence="1 2 5">Catalyzes the hydroxylation of the 5-methoxy-2-methyl-3-(all-trans-polyprenyl)benzoquinone at the C6 position and participates in the biosynthesis of ubiquinone. Catalyzes the reaction through a substrate-mediated reduction pathway, whereby NADH shuttles electrons to 5-methoxy-2-methyl-3-(all-trans-decaprenyl)benzoquinone, which then transfers the electrons to the two Fe(3+) centers. The binding of 5-methoxy-2-methyl-3-(all-trans-polyprenyl)benzoquinone (DMQn) mediates reduction of the diiron center by nicotinamide adenine dinucleotide (NADH) and initiates oxygen activation for subsequent DMQ hydroxylation. The physiological substrates are 5-methoxy-2-methyl-3-(all-trans-nonaprenyl)benzoquinone (DMQ(9)) and 5-methoxy-2-methyl-3-(all-trans-decaprenyl)benzoquinone (DMQ(10)), however in vitro the enzyme does not have any specificity concerning the length of the polyprenyl tail, and accepts tails of various lengths with similar efficiency (By similarity). Also has a structural role in the COQ enzyme complex, stabilizing other COQ polypeptides (By similarity). Involved in lifespan determination in a ubiquinone-independent manner (PubMed:19478076). Plays a role in modulating mitochondrial stress responses, acting in the nucleus, perhaps via regulating gene expression, independent of its characterized mitochondrial function in ubiquinone biosynthesis (By similarity).</text>
</comment>
<comment type="catalytic activity">
    <reaction evidence="6">
        <text>a 5-methoxy-2-methyl-3-(all-trans-polyprenyl)benzoquinone + NADH + O2 = a 3-demethylubiquinone + NAD(+) + H2O</text>
        <dbReference type="Rhea" id="RHEA:81211"/>
        <dbReference type="Rhea" id="RHEA-COMP:19654"/>
        <dbReference type="Rhea" id="RHEA-COMP:19655"/>
        <dbReference type="ChEBI" id="CHEBI:15377"/>
        <dbReference type="ChEBI" id="CHEBI:15379"/>
        <dbReference type="ChEBI" id="CHEBI:57540"/>
        <dbReference type="ChEBI" id="CHEBI:57945"/>
        <dbReference type="ChEBI" id="CHEBI:231825"/>
        <dbReference type="ChEBI" id="CHEBI:231829"/>
        <dbReference type="EC" id="1.14.13.253"/>
    </reaction>
    <physiologicalReaction direction="left-to-right" evidence="6">
        <dbReference type="Rhea" id="RHEA:81212"/>
    </physiologicalReaction>
</comment>
<comment type="cofactor">
    <cofactor evidence="6">
        <name>Fe cation</name>
        <dbReference type="ChEBI" id="CHEBI:24875"/>
    </cofactor>
    <text evidence="6">Binds 2 iron ions per subunit.</text>
</comment>
<comment type="pathway">
    <text evidence="6">Cofactor biosynthesis; ubiquinone biosynthesis.</text>
</comment>
<comment type="subunit">
    <text evidence="2">Component of a multi-subunit COQ enzyme complex (By similarity). Interacts with COQ8B and COQ6. Interacts with COQ9 (By similarity).</text>
</comment>
<comment type="subcellular location">
    <subcellularLocation>
        <location evidence="2 3 4">Mitochondrion inner membrane</location>
        <topology evidence="2 3">Peripheral membrane protein</topology>
        <orientation evidence="2 3">Matrix side</orientation>
    </subcellularLocation>
</comment>
<comment type="tissue specificity">
    <text evidence="4">Highly expressed in tissues with high energy demand such as heart, muscle, liver, and kidney.</text>
</comment>
<comment type="disruption phenotype">
    <text evidence="5">Mice lacking Coq7 start to die after E8. Heterozygous mutant reveal that the reduction of Coq7 levels in these animals profoundly alters their mitochondrial function despite the fact that ubiquinone production is unaffected. The mitochondria of young mutants heterozygous are dysfunctional, exhibiting reduced energy metabolism and a substantial increase in oxidative stress.</text>
</comment>
<comment type="miscellaneous">
    <text evidence="4">In life-span analysis, transgenic expression reverted the extended life span of clk-1 to the comparable level with wild-type control.</text>
</comment>
<comment type="similarity">
    <text evidence="2">Belongs to the COQ7 family.</text>
</comment>
<proteinExistence type="evidence at protein level"/>
<organism>
    <name type="scientific">Mus musculus</name>
    <name type="common">Mouse</name>
    <dbReference type="NCBI Taxonomy" id="10090"/>
    <lineage>
        <taxon>Eukaryota</taxon>
        <taxon>Metazoa</taxon>
        <taxon>Chordata</taxon>
        <taxon>Craniata</taxon>
        <taxon>Vertebrata</taxon>
        <taxon>Euteleostomi</taxon>
        <taxon>Mammalia</taxon>
        <taxon>Eutheria</taxon>
        <taxon>Euarchontoglires</taxon>
        <taxon>Glires</taxon>
        <taxon>Rodentia</taxon>
        <taxon>Myomorpha</taxon>
        <taxon>Muroidea</taxon>
        <taxon>Muridae</taxon>
        <taxon>Murinae</taxon>
        <taxon>Mus</taxon>
        <taxon>Mus</taxon>
    </lineage>
</organism>
<dbReference type="EC" id="1.14.13.253" evidence="6"/>
<dbReference type="EMBL" id="AF080580">
    <property type="protein sequence ID" value="AAC31572.1"/>
    <property type="molecule type" value="mRNA"/>
</dbReference>
<dbReference type="EMBL" id="AF098949">
    <property type="protein sequence ID" value="AAD43649.1"/>
    <property type="molecule type" value="mRNA"/>
</dbReference>
<dbReference type="EMBL" id="BC038681">
    <property type="protein sequence ID" value="AAH38681.1"/>
    <property type="molecule type" value="mRNA"/>
</dbReference>
<dbReference type="EMBL" id="AF053770">
    <property type="protein sequence ID" value="AAC69179.1"/>
    <property type="molecule type" value="mRNA"/>
</dbReference>
<dbReference type="EMBL" id="U81277">
    <property type="protein sequence ID" value="AAC53055.1"/>
    <property type="molecule type" value="mRNA"/>
</dbReference>
<dbReference type="EMBL" id="AA030846">
    <property type="status" value="NOT_ANNOTATED_CDS"/>
    <property type="molecule type" value="mRNA"/>
</dbReference>
<dbReference type="CCDS" id="CCDS21771.1"/>
<dbReference type="PIR" id="JC7756">
    <property type="entry name" value="JC7756"/>
</dbReference>
<dbReference type="RefSeq" id="NP_034070.1">
    <property type="nucleotide sequence ID" value="NM_009940.4"/>
</dbReference>
<dbReference type="SMR" id="P97478"/>
<dbReference type="BioGRID" id="198837">
    <property type="interactions" value="1"/>
</dbReference>
<dbReference type="ComplexPortal" id="CPX-3662">
    <property type="entry name" value="CoQ biosynthetic complex"/>
</dbReference>
<dbReference type="FunCoup" id="P97478">
    <property type="interactions" value="1358"/>
</dbReference>
<dbReference type="STRING" id="10090.ENSMUSP00000095695"/>
<dbReference type="GlyGen" id="P97478">
    <property type="glycosylation" value="1 site, 1 O-linked glycan (1 site)"/>
</dbReference>
<dbReference type="iPTMnet" id="P97478"/>
<dbReference type="PhosphoSitePlus" id="P97478"/>
<dbReference type="SwissPalm" id="P97478"/>
<dbReference type="jPOST" id="P97478"/>
<dbReference type="PaxDb" id="10090-ENSMUSP00000032887"/>
<dbReference type="PeptideAtlas" id="P97478"/>
<dbReference type="ProteomicsDB" id="283354"/>
<dbReference type="Pumba" id="P97478"/>
<dbReference type="Antibodypedia" id="42924">
    <property type="antibodies" value="178 antibodies from 25 providers"/>
</dbReference>
<dbReference type="Ensembl" id="ENSMUST00000032887.4">
    <property type="protein sequence ID" value="ENSMUSP00000032887.4"/>
    <property type="gene ID" value="ENSMUSG00000030652.12"/>
</dbReference>
<dbReference type="GeneID" id="12850"/>
<dbReference type="KEGG" id="mmu:12850"/>
<dbReference type="UCSC" id="uc009jjy.2">
    <property type="organism name" value="mouse"/>
</dbReference>
<dbReference type="AGR" id="MGI:107207"/>
<dbReference type="CTD" id="10229"/>
<dbReference type="MGI" id="MGI:107207">
    <property type="gene designation" value="Coq7"/>
</dbReference>
<dbReference type="VEuPathDB" id="HostDB:ENSMUSG00000030652"/>
<dbReference type="eggNOG" id="KOG4061">
    <property type="taxonomic scope" value="Eukaryota"/>
</dbReference>
<dbReference type="GeneTree" id="ENSGT00390000014520"/>
<dbReference type="HOGENOM" id="CLU_071892_2_0_1"/>
<dbReference type="InParanoid" id="P97478"/>
<dbReference type="OMA" id="WSTAVMG"/>
<dbReference type="OrthoDB" id="275371at2759"/>
<dbReference type="PhylomeDB" id="P97478"/>
<dbReference type="TreeFam" id="TF314559"/>
<dbReference type="BRENDA" id="1.14.99.60">
    <property type="organism ID" value="3474"/>
</dbReference>
<dbReference type="Reactome" id="R-MMU-2142789">
    <property type="pathway name" value="Ubiquinol biosynthesis"/>
</dbReference>
<dbReference type="UniPathway" id="UPA00232"/>
<dbReference type="BioGRID-ORCS" id="12850">
    <property type="hits" value="15 hits in 63 CRISPR screens"/>
</dbReference>
<dbReference type="ChiTaRS" id="Coq7">
    <property type="organism name" value="mouse"/>
</dbReference>
<dbReference type="PRO" id="PR:P97478"/>
<dbReference type="Proteomes" id="UP000000589">
    <property type="component" value="Chromosome 7"/>
</dbReference>
<dbReference type="RNAct" id="P97478">
    <property type="molecule type" value="protein"/>
</dbReference>
<dbReference type="Bgee" id="ENSMUSG00000030652">
    <property type="expression patterns" value="Expressed in facial nucleus and 259 other cell types or tissues"/>
</dbReference>
<dbReference type="ExpressionAtlas" id="P97478">
    <property type="expression patterns" value="baseline and differential"/>
</dbReference>
<dbReference type="GO" id="GO:0031314">
    <property type="term" value="C:extrinsic component of mitochondrial inner membrane"/>
    <property type="evidence" value="ECO:0000314"/>
    <property type="project" value="MGI"/>
</dbReference>
<dbReference type="GO" id="GO:0005743">
    <property type="term" value="C:mitochondrial inner membrane"/>
    <property type="evidence" value="ECO:0000266"/>
    <property type="project" value="ComplexPortal"/>
</dbReference>
<dbReference type="GO" id="GO:0005739">
    <property type="term" value="C:mitochondrion"/>
    <property type="evidence" value="ECO:0007005"/>
    <property type="project" value="MGI"/>
</dbReference>
<dbReference type="GO" id="GO:0008682">
    <property type="term" value="F:3-demethoxyubiquinol 3-hydroxylase activity"/>
    <property type="evidence" value="ECO:0007669"/>
    <property type="project" value="UniProtKB-EC"/>
</dbReference>
<dbReference type="GO" id="GO:0160224">
    <property type="term" value="F:3-demethoxyubiquinone 3-hydroxylase (NADH) activity"/>
    <property type="evidence" value="ECO:0000250"/>
    <property type="project" value="UniProtKB"/>
</dbReference>
<dbReference type="GO" id="GO:0046872">
    <property type="term" value="F:metal ion binding"/>
    <property type="evidence" value="ECO:0007669"/>
    <property type="project" value="UniProtKB-KW"/>
</dbReference>
<dbReference type="GO" id="GO:0016709">
    <property type="term" value="F:oxidoreductase activity, acting on paired donors, with incorporation or reduction of molecular oxygen, NAD(P)H as one donor, and incorporation of one atom of oxygen"/>
    <property type="evidence" value="ECO:0000315"/>
    <property type="project" value="MGI"/>
</dbReference>
<dbReference type="GO" id="GO:0034599">
    <property type="term" value="P:cellular response to oxidative stress"/>
    <property type="evidence" value="ECO:0000315"/>
    <property type="project" value="MGI"/>
</dbReference>
<dbReference type="GO" id="GO:0008340">
    <property type="term" value="P:determination of adult lifespan"/>
    <property type="evidence" value="ECO:0000315"/>
    <property type="project" value="MGI"/>
</dbReference>
<dbReference type="GO" id="GO:0001701">
    <property type="term" value="P:in utero embryonic development"/>
    <property type="evidence" value="ECO:0000315"/>
    <property type="project" value="MGI"/>
</dbReference>
<dbReference type="GO" id="GO:0042775">
    <property type="term" value="P:mitochondrial ATP synthesis coupled electron transport"/>
    <property type="evidence" value="ECO:0000315"/>
    <property type="project" value="MGI"/>
</dbReference>
<dbReference type="GO" id="GO:0007005">
    <property type="term" value="P:mitochondrion organization"/>
    <property type="evidence" value="ECO:0000315"/>
    <property type="project" value="MGI"/>
</dbReference>
<dbReference type="GO" id="GO:0001841">
    <property type="term" value="P:neural tube formation"/>
    <property type="evidence" value="ECO:0000315"/>
    <property type="project" value="MGI"/>
</dbReference>
<dbReference type="GO" id="GO:0022008">
    <property type="term" value="P:neurogenesis"/>
    <property type="evidence" value="ECO:0000315"/>
    <property type="project" value="MGI"/>
</dbReference>
<dbReference type="GO" id="GO:0022904">
    <property type="term" value="P:respiratory electron transport chain"/>
    <property type="evidence" value="ECO:0000315"/>
    <property type="project" value="MGI"/>
</dbReference>
<dbReference type="GO" id="GO:0006979">
    <property type="term" value="P:response to oxidative stress"/>
    <property type="evidence" value="ECO:0000315"/>
    <property type="project" value="MGI"/>
</dbReference>
<dbReference type="GO" id="GO:0006744">
    <property type="term" value="P:ubiquinone biosynthetic process"/>
    <property type="evidence" value="ECO:0000315"/>
    <property type="project" value="MGI"/>
</dbReference>
<dbReference type="CDD" id="cd01042">
    <property type="entry name" value="DMQH"/>
    <property type="match status" value="1"/>
</dbReference>
<dbReference type="HAMAP" id="MF_01658">
    <property type="entry name" value="COQ7"/>
    <property type="match status" value="1"/>
</dbReference>
<dbReference type="InterPro" id="IPR009078">
    <property type="entry name" value="Ferritin-like_SF"/>
</dbReference>
<dbReference type="InterPro" id="IPR011566">
    <property type="entry name" value="Ubq_synth_Coq7"/>
</dbReference>
<dbReference type="PANTHER" id="PTHR11237:SF4">
    <property type="entry name" value="5-DEMETHOXYUBIQUINONE HYDROXYLASE, MITOCHONDRIAL"/>
    <property type="match status" value="1"/>
</dbReference>
<dbReference type="PANTHER" id="PTHR11237">
    <property type="entry name" value="COENZYME Q10 BIOSYNTHESIS PROTEIN 7"/>
    <property type="match status" value="1"/>
</dbReference>
<dbReference type="Pfam" id="PF03232">
    <property type="entry name" value="COQ7"/>
    <property type="match status" value="1"/>
</dbReference>
<dbReference type="SUPFAM" id="SSF47240">
    <property type="entry name" value="Ferritin-like"/>
    <property type="match status" value="1"/>
</dbReference>
<name>COQ7_MOUSE</name>
<reference key="1">
    <citation type="submission" date="1998-07" db="EMBL/GenBank/DDBJ databases">
        <title>Cloning and characterization of murine clk-1.</title>
        <authorList>
            <person name="Kim H.J."/>
            <person name="Moon Y.I."/>
            <person name="Lee J.E."/>
            <person name="Lee H.W."/>
            <person name="Seo J.S."/>
        </authorList>
    </citation>
    <scope>NUCLEOTIDE SEQUENCE [MRNA]</scope>
    <source>
        <strain>129</strain>
    </source>
</reference>
<reference key="2">
    <citation type="journal article" date="1999" name="Genomics">
        <title>Orthologues of the Caenorhabditis elegans longevity gene clk-1 in mouse and human.</title>
        <authorList>
            <person name="Asaumi S."/>
            <person name="Kuroyanagi H."/>
            <person name="Seki N."/>
            <person name="Shirasawa T."/>
        </authorList>
    </citation>
    <scope>NUCLEOTIDE SEQUENCE [MRNA]</scope>
</reference>
<reference key="3">
    <citation type="journal article" date="2004" name="Genome Res.">
        <title>The status, quality, and expansion of the NIH full-length cDNA project: the Mammalian Gene Collection (MGC).</title>
        <authorList>
            <consortium name="The MGC Project Team"/>
        </authorList>
    </citation>
    <scope>NUCLEOTIDE SEQUENCE [LARGE SCALE MRNA]</scope>
    <source>
        <strain>C57BL/6J</strain>
        <tissue>Mammary gland</tissue>
    </source>
</reference>
<reference key="4">
    <citation type="journal article" date="1999" name="Mamm. Genome">
        <title>Conservation of the Caenorhabditis elegans timing gene clk-1 from yeast to human: a gene required for ubiquinone biosynthesis with potential implications for aging.</title>
        <authorList>
            <person name="Vajo Z."/>
            <person name="King L.M."/>
            <person name="Jonassen T."/>
            <person name="Wilkin D.J."/>
            <person name="Ho N."/>
            <person name="Munnich A."/>
            <person name="Clarke C.F."/>
            <person name="Francomano C.A."/>
        </authorList>
    </citation>
    <scope>NUCLEOTIDE SEQUENCE [MRNA] OF 39-217</scope>
</reference>
<reference key="5">
    <citation type="journal article" date="1997" name="Science">
        <title>Structural and functional conservation of the Caenorhabditis elegans timing gene clk-1.</title>
        <authorList>
            <person name="Ewbank J.J."/>
            <person name="Barnes T.M."/>
            <person name="Lakowski B."/>
            <person name="Lussier M."/>
            <person name="Bussey H."/>
            <person name="Hekimi S."/>
        </authorList>
    </citation>
    <scope>NUCLEOTIDE SEQUENCE [MRNA] OF 74-175</scope>
    <source>
        <tissue>Embryo</tissue>
    </source>
</reference>
<reference key="6">
    <citation type="submission" date="1996-08" db="EMBL/GenBank/DDBJ databases">
        <authorList>
            <person name="Marra M."/>
            <person name="Hillier L."/>
            <person name="Allen M."/>
            <person name="Bowles M."/>
            <person name="Dietrich N."/>
            <person name="Dubuque T."/>
            <person name="Geisel S."/>
            <person name="Kucaba T."/>
            <person name="Lacy M."/>
            <person name="Le M."/>
            <person name="Martin J."/>
            <person name="Morris M."/>
            <person name="Schellenberg K."/>
            <person name="Steptoe M."/>
            <person name="Tan F."/>
            <person name="Underwood K."/>
            <person name="Moore B."/>
            <person name="Theising B."/>
            <person name="Wylie T."/>
            <person name="Lennon G."/>
            <person name="Soares B."/>
            <person name="Wilson R."/>
            <person name="Waterston R."/>
        </authorList>
    </citation>
    <scope>NUCLEOTIDE SEQUENCE [MRNA] OF 146-217</scope>
    <source>
        <strain>C57BL/6J</strain>
        <tissue>Embryo</tissue>
    </source>
</reference>
<reference key="7">
    <citation type="journal article" date="2001" name="Biochem. Biophys. Res. Commun.">
        <title>Mouse coq7/clk-1 orthologue rescued slowed rhythmic behavior and extended life span of clk-1 longevity mutant in Caenorhabditis elegans.</title>
        <authorList>
            <person name="Takahashi M."/>
            <person name="Asaumi S."/>
            <person name="Honda S."/>
            <person name="Suzuki Y."/>
            <person name="Nakai D."/>
            <person name="Kuroyanagi H."/>
            <person name="Shimizu T."/>
            <person name="Honda Y."/>
            <person name="Shirasawa T."/>
        </authorList>
    </citation>
    <scope>TISSUE SPECIFICITY</scope>
    <scope>SUBCELLULAR LOCATION</scope>
    <scope>TRANSGENIC MICE</scope>
</reference>
<reference key="8">
    <citation type="journal article" date="2001" name="J. Biol. Chem.">
        <title>Mouse CLK-1 is imported into mitochondria by an unusual process that requires a leader sequence but no membrane potential.</title>
        <authorList>
            <person name="Jiang N."/>
            <person name="Levavasseur F."/>
            <person name="McCright B."/>
            <person name="Shoubridge E.A."/>
            <person name="Hekimi S."/>
        </authorList>
    </citation>
    <scope>SUBCELLULAR LOCATION</scope>
</reference>
<reference key="9">
    <citation type="journal article" date="2009" name="J. Biol. Chem.">
        <title>Reversal of the mitochondrial phenotype and slow development of oxidative biomarkers of aging in long-lived Mclk1+/- mice.</title>
        <authorList>
            <person name="Lapointe J."/>
            <person name="Stepanyan Z."/>
            <person name="Bigras E."/>
            <person name="Hekimi S."/>
        </authorList>
    </citation>
    <scope>FUNCTION</scope>
    <scope>DISRUPTION PHENOTYPE</scope>
</reference>
<reference key="10">
    <citation type="journal article" date="2010" name="Biochemistry">
        <title>The aging-associated enzyme CLK-1 is a member of the carboxylate-bridged diiron family of proteins.</title>
        <authorList>
            <person name="Behan R.K."/>
            <person name="Lippard S.J."/>
        </authorList>
    </citation>
    <scope>FUNCTION</scope>
    <scope>CATALYTIC ACTIVITY</scope>
    <scope>COFACTOR</scope>
</reference>
<reference key="11">
    <citation type="journal article" date="2010" name="Cell">
        <title>A tissue-specific atlas of mouse protein phosphorylation and expression.</title>
        <authorList>
            <person name="Huttlin E.L."/>
            <person name="Jedrychowski M.P."/>
            <person name="Elias J.E."/>
            <person name="Goswami T."/>
            <person name="Rad R."/>
            <person name="Beausoleil S.A."/>
            <person name="Villen J."/>
            <person name="Haas W."/>
            <person name="Sowa M.E."/>
            <person name="Gygi S.P."/>
        </authorList>
    </citation>
    <scope>IDENTIFICATION BY MASS SPECTROMETRY [LARGE SCALE ANALYSIS]</scope>
    <source>
        <tissue>Brain</tissue>
        <tissue>Brown adipose tissue</tissue>
        <tissue>Heart</tissue>
        <tissue>Kidney</tissue>
        <tissue>Liver</tissue>
        <tissue>Lung</tissue>
        <tissue>Spleen</tissue>
        <tissue>Testis</tissue>
    </source>
</reference>
<reference key="12">
    <citation type="journal article" date="2017" name="J. Cell. Mol. Med.">
        <title>Pathogenicity of two COQ7 mutations and responses to 2,4-dihydroxybenzoate bypass treatment.</title>
        <authorList>
            <person name="Wang Y."/>
            <person name="Smith C."/>
            <person name="Parboosingh J.S."/>
            <person name="Khan A."/>
            <person name="Innes M."/>
            <person name="Hekimi S."/>
        </authorList>
    </citation>
    <scope>MUTAGENESIS OF GLU-178</scope>
</reference>
<evidence type="ECO:0000250" key="1">
    <source>
        <dbReference type="UniProtKB" id="Q99807"/>
    </source>
</evidence>
<evidence type="ECO:0000255" key="2">
    <source>
        <dbReference type="HAMAP-Rule" id="MF_03194"/>
    </source>
</evidence>
<evidence type="ECO:0000269" key="3">
    <source>
    </source>
</evidence>
<evidence type="ECO:0000269" key="4">
    <source>
    </source>
</evidence>
<evidence type="ECO:0000269" key="5">
    <source>
    </source>
</evidence>
<evidence type="ECO:0000269" key="6">
    <source>
    </source>
</evidence>
<evidence type="ECO:0000269" key="7">
    <source>
    </source>
</evidence>
<evidence type="ECO:0000305" key="8">
    <source>
    </source>
</evidence>
<evidence type="ECO:0000312" key="9">
    <source>
        <dbReference type="MGI" id="MGI:107207"/>
    </source>
</evidence>
<accession>P97478</accession>
<accession>Q9R0D7</accession>